<gene>
    <name evidence="1" type="primary">glyS</name>
    <name type="ordered locus">ECS88_3976</name>
</gene>
<dbReference type="EC" id="6.1.1.14" evidence="1"/>
<dbReference type="EMBL" id="CU928161">
    <property type="protein sequence ID" value="CAR05185.1"/>
    <property type="molecule type" value="Genomic_DNA"/>
</dbReference>
<dbReference type="RefSeq" id="WP_001291788.1">
    <property type="nucleotide sequence ID" value="NC_011742.1"/>
</dbReference>
<dbReference type="SMR" id="B7MER4"/>
<dbReference type="GeneID" id="75173758"/>
<dbReference type="KEGG" id="ecz:ECS88_3976"/>
<dbReference type="HOGENOM" id="CLU_007220_2_2_6"/>
<dbReference type="Proteomes" id="UP000000747">
    <property type="component" value="Chromosome"/>
</dbReference>
<dbReference type="GO" id="GO:0005829">
    <property type="term" value="C:cytosol"/>
    <property type="evidence" value="ECO:0007669"/>
    <property type="project" value="TreeGrafter"/>
</dbReference>
<dbReference type="GO" id="GO:0004814">
    <property type="term" value="F:arginine-tRNA ligase activity"/>
    <property type="evidence" value="ECO:0007669"/>
    <property type="project" value="InterPro"/>
</dbReference>
<dbReference type="GO" id="GO:0005524">
    <property type="term" value="F:ATP binding"/>
    <property type="evidence" value="ECO:0007669"/>
    <property type="project" value="UniProtKB-UniRule"/>
</dbReference>
<dbReference type="GO" id="GO:0004820">
    <property type="term" value="F:glycine-tRNA ligase activity"/>
    <property type="evidence" value="ECO:0007669"/>
    <property type="project" value="UniProtKB-UniRule"/>
</dbReference>
<dbReference type="GO" id="GO:0006420">
    <property type="term" value="P:arginyl-tRNA aminoacylation"/>
    <property type="evidence" value="ECO:0007669"/>
    <property type="project" value="InterPro"/>
</dbReference>
<dbReference type="GO" id="GO:0006426">
    <property type="term" value="P:glycyl-tRNA aminoacylation"/>
    <property type="evidence" value="ECO:0007669"/>
    <property type="project" value="UniProtKB-UniRule"/>
</dbReference>
<dbReference type="HAMAP" id="MF_00255">
    <property type="entry name" value="Gly_tRNA_synth_beta"/>
    <property type="match status" value="1"/>
</dbReference>
<dbReference type="InterPro" id="IPR008909">
    <property type="entry name" value="DALR_anticod-bd"/>
</dbReference>
<dbReference type="InterPro" id="IPR015944">
    <property type="entry name" value="Gly-tRNA-synth_bsu"/>
</dbReference>
<dbReference type="InterPro" id="IPR006194">
    <property type="entry name" value="Gly-tRNA-synth_heterodimer"/>
</dbReference>
<dbReference type="NCBIfam" id="TIGR00211">
    <property type="entry name" value="glyS"/>
    <property type="match status" value="1"/>
</dbReference>
<dbReference type="PANTHER" id="PTHR30075:SF2">
    <property type="entry name" value="GLYCINE--TRNA LIGASE, CHLOROPLASTIC_MITOCHONDRIAL 2"/>
    <property type="match status" value="1"/>
</dbReference>
<dbReference type="PANTHER" id="PTHR30075">
    <property type="entry name" value="GLYCYL-TRNA SYNTHETASE"/>
    <property type="match status" value="1"/>
</dbReference>
<dbReference type="Pfam" id="PF05746">
    <property type="entry name" value="DALR_1"/>
    <property type="match status" value="1"/>
</dbReference>
<dbReference type="Pfam" id="PF02092">
    <property type="entry name" value="tRNA_synt_2f"/>
    <property type="match status" value="1"/>
</dbReference>
<dbReference type="PRINTS" id="PR01045">
    <property type="entry name" value="TRNASYNTHGB"/>
</dbReference>
<dbReference type="SUPFAM" id="SSF109604">
    <property type="entry name" value="HD-domain/PDEase-like"/>
    <property type="match status" value="1"/>
</dbReference>
<dbReference type="PROSITE" id="PS50861">
    <property type="entry name" value="AA_TRNA_LIGASE_II_GLYAB"/>
    <property type="match status" value="1"/>
</dbReference>
<sequence length="689" mass="76813">MSEKTFLVEIGTEELPPKALRSLAESFAANFTAELDNAGLAHGTVQWFAAPRRLALKVANLAEAQPDREIEKRGPAIAQAFDAEGKPSKAAEGWARGCGITVDQAERLTTDKGEWLLYRAHVKGESTEALLPNMVATSLAKLPIPKLMRWGASDVHFVRPVHTVTLLLGDKVIPATILGIQSDRVIRGHRFMGEPEFTIDNADQYPEILRERGKVIADYEERKAKIKADAEEAARKIGGNADLSESLLEEVASLVEWPVVLTAKFEEKFLAVPSEALVYTMKGDQKYFPVYANDGKLLPNFIFVANIESKDPQQIISGNEKVVRPRLADAEFFFNTDRKKRLEDNLPRLQTVLFQQQLGTLRDKTDRIQALAGWIAEQIGADVNHATRAGLLSKCDLMTNMVFEFTDTQGVMGMHYARHDGEAEDVAVALNEQYQPRFAGDDLPSNPVACALAIADKMDTLAGIFGIGQHPKGDKDPFALRRAALGVLRIIVEKNLNLDLQTLTEEAVRLYGDKLTNANVVDDVIDFMLGRFRAWYQDEGYTVDTIQAVLARRPTRPADFDARMKAVSHFRTLEAAAALAAANKRVSNILAKSDEVLSDRVNASTLKEPEEIKLAMQVVVLRDKLEPYFAEGRYQDALVELAELREPVDAFFDKVMVMVDDKELRINRLTMLEKLRELFLRVADISLLQ</sequence>
<protein>
    <recommendedName>
        <fullName evidence="1">Glycine--tRNA ligase beta subunit</fullName>
        <ecNumber evidence="1">6.1.1.14</ecNumber>
    </recommendedName>
    <alternativeName>
        <fullName evidence="1">Glycyl-tRNA synthetase beta subunit</fullName>
        <shortName evidence="1">GlyRS</shortName>
    </alternativeName>
</protein>
<keyword id="KW-0030">Aminoacyl-tRNA synthetase</keyword>
<keyword id="KW-0067">ATP-binding</keyword>
<keyword id="KW-0963">Cytoplasm</keyword>
<keyword id="KW-0436">Ligase</keyword>
<keyword id="KW-0547">Nucleotide-binding</keyword>
<keyword id="KW-0648">Protein biosynthesis</keyword>
<keyword id="KW-1185">Reference proteome</keyword>
<name>SYGB_ECO45</name>
<reference key="1">
    <citation type="journal article" date="2009" name="PLoS Genet.">
        <title>Organised genome dynamics in the Escherichia coli species results in highly diverse adaptive paths.</title>
        <authorList>
            <person name="Touchon M."/>
            <person name="Hoede C."/>
            <person name="Tenaillon O."/>
            <person name="Barbe V."/>
            <person name="Baeriswyl S."/>
            <person name="Bidet P."/>
            <person name="Bingen E."/>
            <person name="Bonacorsi S."/>
            <person name="Bouchier C."/>
            <person name="Bouvet O."/>
            <person name="Calteau A."/>
            <person name="Chiapello H."/>
            <person name="Clermont O."/>
            <person name="Cruveiller S."/>
            <person name="Danchin A."/>
            <person name="Diard M."/>
            <person name="Dossat C."/>
            <person name="Karoui M.E."/>
            <person name="Frapy E."/>
            <person name="Garry L."/>
            <person name="Ghigo J.M."/>
            <person name="Gilles A.M."/>
            <person name="Johnson J."/>
            <person name="Le Bouguenec C."/>
            <person name="Lescat M."/>
            <person name="Mangenot S."/>
            <person name="Martinez-Jehanne V."/>
            <person name="Matic I."/>
            <person name="Nassif X."/>
            <person name="Oztas S."/>
            <person name="Petit M.A."/>
            <person name="Pichon C."/>
            <person name="Rouy Z."/>
            <person name="Ruf C.S."/>
            <person name="Schneider D."/>
            <person name="Tourret J."/>
            <person name="Vacherie B."/>
            <person name="Vallenet D."/>
            <person name="Medigue C."/>
            <person name="Rocha E.P.C."/>
            <person name="Denamur E."/>
        </authorList>
    </citation>
    <scope>NUCLEOTIDE SEQUENCE [LARGE SCALE GENOMIC DNA]</scope>
    <source>
        <strain>S88 / ExPEC</strain>
    </source>
</reference>
<feature type="chain" id="PRO_1000197193" description="Glycine--tRNA ligase beta subunit">
    <location>
        <begin position="1"/>
        <end position="689"/>
    </location>
</feature>
<comment type="catalytic activity">
    <reaction evidence="1">
        <text>tRNA(Gly) + glycine + ATP = glycyl-tRNA(Gly) + AMP + diphosphate</text>
        <dbReference type="Rhea" id="RHEA:16013"/>
        <dbReference type="Rhea" id="RHEA-COMP:9664"/>
        <dbReference type="Rhea" id="RHEA-COMP:9683"/>
        <dbReference type="ChEBI" id="CHEBI:30616"/>
        <dbReference type="ChEBI" id="CHEBI:33019"/>
        <dbReference type="ChEBI" id="CHEBI:57305"/>
        <dbReference type="ChEBI" id="CHEBI:78442"/>
        <dbReference type="ChEBI" id="CHEBI:78522"/>
        <dbReference type="ChEBI" id="CHEBI:456215"/>
        <dbReference type="EC" id="6.1.1.14"/>
    </reaction>
</comment>
<comment type="subunit">
    <text evidence="1">Tetramer of two alpha and two beta subunits.</text>
</comment>
<comment type="subcellular location">
    <subcellularLocation>
        <location evidence="1">Cytoplasm</location>
    </subcellularLocation>
</comment>
<comment type="similarity">
    <text evidence="1">Belongs to the class-II aminoacyl-tRNA synthetase family.</text>
</comment>
<organism>
    <name type="scientific">Escherichia coli O45:K1 (strain S88 / ExPEC)</name>
    <dbReference type="NCBI Taxonomy" id="585035"/>
    <lineage>
        <taxon>Bacteria</taxon>
        <taxon>Pseudomonadati</taxon>
        <taxon>Pseudomonadota</taxon>
        <taxon>Gammaproteobacteria</taxon>
        <taxon>Enterobacterales</taxon>
        <taxon>Enterobacteriaceae</taxon>
        <taxon>Escherichia</taxon>
    </lineage>
</organism>
<accession>B7MER4</accession>
<evidence type="ECO:0000255" key="1">
    <source>
        <dbReference type="HAMAP-Rule" id="MF_00255"/>
    </source>
</evidence>
<proteinExistence type="inferred from homology"/>